<organism>
    <name type="scientific">Pseudomonas paraeruginosa (strain DSM 24068 / PA7)</name>
    <name type="common">Pseudomonas aeruginosa (strain PA7)</name>
    <dbReference type="NCBI Taxonomy" id="381754"/>
    <lineage>
        <taxon>Bacteria</taxon>
        <taxon>Pseudomonadati</taxon>
        <taxon>Pseudomonadota</taxon>
        <taxon>Gammaproteobacteria</taxon>
        <taxon>Pseudomonadales</taxon>
        <taxon>Pseudomonadaceae</taxon>
        <taxon>Pseudomonas</taxon>
        <taxon>Pseudomonas paraeruginosa</taxon>
    </lineage>
</organism>
<comment type="function">
    <text evidence="1">Excises uracil residues from the DNA which can arise as a result of misincorporation of dUMP residues by DNA polymerase or due to deamination of cytosine.</text>
</comment>
<comment type="catalytic activity">
    <reaction evidence="1">
        <text>Hydrolyzes single-stranded DNA or mismatched double-stranded DNA and polynucleotides, releasing free uracil.</text>
        <dbReference type="EC" id="3.2.2.27"/>
    </reaction>
</comment>
<comment type="subcellular location">
    <subcellularLocation>
        <location evidence="1">Cytoplasm</location>
    </subcellularLocation>
</comment>
<comment type="similarity">
    <text evidence="1">Belongs to the uracil-DNA glycosylase (UDG) superfamily. UNG family.</text>
</comment>
<evidence type="ECO:0000255" key="1">
    <source>
        <dbReference type="HAMAP-Rule" id="MF_00148"/>
    </source>
</evidence>
<feature type="chain" id="PRO_1000009926" description="Uracil-DNA glycosylase">
    <location>
        <begin position="1"/>
        <end position="231"/>
    </location>
</feature>
<feature type="active site" description="Proton acceptor" evidence="1">
    <location>
        <position position="71"/>
    </location>
</feature>
<dbReference type="EC" id="3.2.2.27" evidence="1"/>
<dbReference type="EMBL" id="CP000744">
    <property type="protein sequence ID" value="ABR86726.1"/>
    <property type="molecule type" value="Genomic_DNA"/>
</dbReference>
<dbReference type="RefSeq" id="WP_003106436.1">
    <property type="nucleotide sequence ID" value="NC_009656.1"/>
</dbReference>
<dbReference type="SMR" id="A6VAM7"/>
<dbReference type="GeneID" id="77222682"/>
<dbReference type="KEGG" id="pap:PSPA7_4770"/>
<dbReference type="HOGENOM" id="CLU_032162_3_1_6"/>
<dbReference type="Proteomes" id="UP000001582">
    <property type="component" value="Chromosome"/>
</dbReference>
<dbReference type="GO" id="GO:0005737">
    <property type="term" value="C:cytoplasm"/>
    <property type="evidence" value="ECO:0007669"/>
    <property type="project" value="UniProtKB-SubCell"/>
</dbReference>
<dbReference type="GO" id="GO:0004844">
    <property type="term" value="F:uracil DNA N-glycosylase activity"/>
    <property type="evidence" value="ECO:0007669"/>
    <property type="project" value="UniProtKB-UniRule"/>
</dbReference>
<dbReference type="GO" id="GO:0097510">
    <property type="term" value="P:base-excision repair, AP site formation via deaminated base removal"/>
    <property type="evidence" value="ECO:0007669"/>
    <property type="project" value="TreeGrafter"/>
</dbReference>
<dbReference type="CDD" id="cd10027">
    <property type="entry name" value="UDG-F1-like"/>
    <property type="match status" value="1"/>
</dbReference>
<dbReference type="FunFam" id="3.40.470.10:FF:000001">
    <property type="entry name" value="Uracil-DNA glycosylase"/>
    <property type="match status" value="1"/>
</dbReference>
<dbReference type="Gene3D" id="3.40.470.10">
    <property type="entry name" value="Uracil-DNA glycosylase-like domain"/>
    <property type="match status" value="1"/>
</dbReference>
<dbReference type="HAMAP" id="MF_00148">
    <property type="entry name" value="UDG"/>
    <property type="match status" value="1"/>
</dbReference>
<dbReference type="InterPro" id="IPR002043">
    <property type="entry name" value="UDG_fam1"/>
</dbReference>
<dbReference type="InterPro" id="IPR018085">
    <property type="entry name" value="Ura-DNA_Glyclase_AS"/>
</dbReference>
<dbReference type="InterPro" id="IPR005122">
    <property type="entry name" value="Uracil-DNA_glycosylase-like"/>
</dbReference>
<dbReference type="InterPro" id="IPR036895">
    <property type="entry name" value="Uracil-DNA_glycosylase-like_sf"/>
</dbReference>
<dbReference type="NCBIfam" id="NF003588">
    <property type="entry name" value="PRK05254.1-1"/>
    <property type="match status" value="1"/>
</dbReference>
<dbReference type="NCBIfam" id="NF003589">
    <property type="entry name" value="PRK05254.1-2"/>
    <property type="match status" value="1"/>
</dbReference>
<dbReference type="NCBIfam" id="NF003591">
    <property type="entry name" value="PRK05254.1-4"/>
    <property type="match status" value="1"/>
</dbReference>
<dbReference type="NCBIfam" id="NF003592">
    <property type="entry name" value="PRK05254.1-5"/>
    <property type="match status" value="1"/>
</dbReference>
<dbReference type="NCBIfam" id="TIGR00628">
    <property type="entry name" value="ung"/>
    <property type="match status" value="1"/>
</dbReference>
<dbReference type="PANTHER" id="PTHR11264">
    <property type="entry name" value="URACIL-DNA GLYCOSYLASE"/>
    <property type="match status" value="1"/>
</dbReference>
<dbReference type="PANTHER" id="PTHR11264:SF0">
    <property type="entry name" value="URACIL-DNA GLYCOSYLASE"/>
    <property type="match status" value="1"/>
</dbReference>
<dbReference type="Pfam" id="PF03167">
    <property type="entry name" value="UDG"/>
    <property type="match status" value="1"/>
</dbReference>
<dbReference type="SMART" id="SM00986">
    <property type="entry name" value="UDG"/>
    <property type="match status" value="1"/>
</dbReference>
<dbReference type="SMART" id="SM00987">
    <property type="entry name" value="UreE_C"/>
    <property type="match status" value="1"/>
</dbReference>
<dbReference type="SUPFAM" id="SSF52141">
    <property type="entry name" value="Uracil-DNA glycosylase-like"/>
    <property type="match status" value="1"/>
</dbReference>
<dbReference type="PROSITE" id="PS00130">
    <property type="entry name" value="U_DNA_GLYCOSYLASE"/>
    <property type="match status" value="1"/>
</dbReference>
<proteinExistence type="inferred from homology"/>
<accession>A6VAM7</accession>
<gene>
    <name evidence="1" type="primary">ung</name>
    <name type="ordered locus">PSPA7_4770</name>
</gene>
<name>UNG_PSEP7</name>
<sequence>MTDNDDRIKLEASWKEALREEFDKPYMKQLGEFLRQEKAAGKVIFPPGPLIFNALNTTPLENVKVVIIGQDPYHGPGQAHGLCFSVQPGVPTPPSLQNIYKELNRDLNIPIPNNGYLQRWAEQGVLLLNTSLTVEQAKAGSHANAGWQPFTDRVIEVVNERCERLVFLLWGSHAQSKQKLIDPQRHLILKSAHPSPLSAYRGFLGNGHFSRTNKFLEQNGKTPIDWSLPDL</sequence>
<protein>
    <recommendedName>
        <fullName evidence="1">Uracil-DNA glycosylase</fullName>
        <shortName evidence="1">UDG</shortName>
        <ecNumber evidence="1">3.2.2.27</ecNumber>
    </recommendedName>
</protein>
<keyword id="KW-0963">Cytoplasm</keyword>
<keyword id="KW-0227">DNA damage</keyword>
<keyword id="KW-0234">DNA repair</keyword>
<keyword id="KW-0378">Hydrolase</keyword>
<reference key="1">
    <citation type="submission" date="2007-06" db="EMBL/GenBank/DDBJ databases">
        <authorList>
            <person name="Dodson R.J."/>
            <person name="Harkins D."/>
            <person name="Paulsen I.T."/>
        </authorList>
    </citation>
    <scope>NUCLEOTIDE SEQUENCE [LARGE SCALE GENOMIC DNA]</scope>
    <source>
        <strain>DSM 24068 / PA7</strain>
    </source>
</reference>